<comment type="function">
    <text>Granulocyte/macrophage colony-stimulating factors are cytokines that act in hematopoiesis by controlling the production, differentiation, and function of 2 related white cell populations of the blood, the granulocytes and the monocytes-macrophages.</text>
</comment>
<comment type="function">
    <text>This CSF induces granulocytes, macrophages, mast cells, stem cells, erythroid cells, eosinophils and megakaryocytes.</text>
</comment>
<comment type="subunit">
    <text>Monomer.</text>
</comment>
<comment type="subcellular location">
    <subcellularLocation>
        <location>Secreted</location>
    </subcellularLocation>
</comment>
<comment type="tissue specificity">
    <text>Activated T-cells, mast cells, natural killer cells.</text>
</comment>
<comment type="similarity">
    <text evidence="3">Belongs to the IL-3 family.</text>
</comment>
<sequence>MSRLPVLLLLHLLVSPGLQAPMTQTTSLKTSWAKCSNMIDEIITHLNQPPLPSPDFNNLNEEDQTILVEKNLRRSNLEAFSKAVKSLQNASAIESILKNLPPCLPMATAAPTRPPIRITNGDRNDFRRKLKFYLKTLENEQAQ</sequence>
<protein>
    <recommendedName>
        <fullName>Interleukin-3</fullName>
        <shortName>IL-3</shortName>
    </recommendedName>
    <alternativeName>
        <fullName>Hematopoietic growth factor</fullName>
    </alternativeName>
    <alternativeName>
        <fullName>Mast cell growth factor</fullName>
        <shortName>MCGF</shortName>
    </alternativeName>
    <alternativeName>
        <fullName>Multipotential colony-stimulating factor</fullName>
    </alternativeName>
    <alternativeName>
        <fullName>P-cell-stimulating factor</fullName>
    </alternativeName>
</protein>
<keyword id="KW-0202">Cytokine</keyword>
<keyword id="KW-1015">Disulfide bond</keyword>
<keyword id="KW-0325">Glycoprotein</keyword>
<keyword id="KW-0339">Growth factor</keyword>
<keyword id="KW-1185">Reference proteome</keyword>
<keyword id="KW-0964">Secreted</keyword>
<keyword id="KW-0732">Signal</keyword>
<accession>P25140</accession>
<dbReference type="EMBL" id="X51890">
    <property type="protein sequence ID" value="CAA36172.1"/>
    <property type="molecule type" value="Genomic_DNA"/>
</dbReference>
<dbReference type="PIR" id="A60159">
    <property type="entry name" value="A60159"/>
</dbReference>
<dbReference type="RefSeq" id="NP_001095204.1">
    <property type="nucleotide sequence ID" value="NM_001101734.1"/>
</dbReference>
<dbReference type="SMR" id="P25140"/>
<dbReference type="FunCoup" id="P25140">
    <property type="interactions" value="801"/>
</dbReference>
<dbReference type="STRING" id="9544.ENSMMUP00000022233"/>
<dbReference type="GlyCosmos" id="P25140">
    <property type="glycosylation" value="1 site, No reported glycans"/>
</dbReference>
<dbReference type="PaxDb" id="9544-ENSMMUP00000022233"/>
<dbReference type="Ensembl" id="ENSMMUT00000023756.4">
    <property type="protein sequence ID" value="ENSMMUP00000022233.2"/>
    <property type="gene ID" value="ENSMMUG00000016912.4"/>
</dbReference>
<dbReference type="GeneID" id="706946"/>
<dbReference type="KEGG" id="mcc:706946"/>
<dbReference type="CTD" id="3562"/>
<dbReference type="VEuPathDB" id="HostDB:ENSMMUG00000016912"/>
<dbReference type="VGNC" id="VGNC:84395">
    <property type="gene designation" value="IL3"/>
</dbReference>
<dbReference type="eggNOG" id="ENOG502TD4X">
    <property type="taxonomic scope" value="Eukaryota"/>
</dbReference>
<dbReference type="GeneTree" id="ENSGT00940000163393"/>
<dbReference type="HOGENOM" id="CLU_144877_0_0_1"/>
<dbReference type="InParanoid" id="P25140"/>
<dbReference type="OMA" id="IKDGDWN"/>
<dbReference type="OrthoDB" id="9808790at2759"/>
<dbReference type="TreeFam" id="TF338567"/>
<dbReference type="Proteomes" id="UP000006718">
    <property type="component" value="Chromosome 6"/>
</dbReference>
<dbReference type="GO" id="GO:0005615">
    <property type="term" value="C:extracellular space"/>
    <property type="evidence" value="ECO:0000318"/>
    <property type="project" value="GO_Central"/>
</dbReference>
<dbReference type="GO" id="GO:0005125">
    <property type="term" value="F:cytokine activity"/>
    <property type="evidence" value="ECO:0000318"/>
    <property type="project" value="GO_Central"/>
</dbReference>
<dbReference type="GO" id="GO:0008083">
    <property type="term" value="F:growth factor activity"/>
    <property type="evidence" value="ECO:0007669"/>
    <property type="project" value="UniProtKB-KW"/>
</dbReference>
<dbReference type="GO" id="GO:0005135">
    <property type="term" value="F:interleukin-3 receptor binding"/>
    <property type="evidence" value="ECO:0007669"/>
    <property type="project" value="InterPro"/>
</dbReference>
<dbReference type="GO" id="GO:0097696">
    <property type="term" value="P:cell surface receptor signaling pathway via STAT"/>
    <property type="evidence" value="ECO:0007669"/>
    <property type="project" value="Ensembl"/>
</dbReference>
<dbReference type="GO" id="GO:0035162">
    <property type="term" value="P:embryonic hemopoiesis"/>
    <property type="evidence" value="ECO:0007669"/>
    <property type="project" value="Ensembl"/>
</dbReference>
<dbReference type="GO" id="GO:0006955">
    <property type="term" value="P:immune response"/>
    <property type="evidence" value="ECO:0007669"/>
    <property type="project" value="InterPro"/>
</dbReference>
<dbReference type="GO" id="GO:0038156">
    <property type="term" value="P:interleukin-3-mediated signaling pathway"/>
    <property type="evidence" value="ECO:0000318"/>
    <property type="project" value="GO_Central"/>
</dbReference>
<dbReference type="GO" id="GO:0008284">
    <property type="term" value="P:positive regulation of cell population proliferation"/>
    <property type="evidence" value="ECO:0007669"/>
    <property type="project" value="Ensembl"/>
</dbReference>
<dbReference type="Gene3D" id="1.20.1250.10">
    <property type="match status" value="1"/>
</dbReference>
<dbReference type="InterPro" id="IPR009079">
    <property type="entry name" value="4_helix_cytokine-like_core"/>
</dbReference>
<dbReference type="InterPro" id="IPR002183">
    <property type="entry name" value="IL-3"/>
</dbReference>
<dbReference type="PANTHER" id="PTHR48489">
    <property type="entry name" value="INTERLEUKIN-3"/>
    <property type="match status" value="1"/>
</dbReference>
<dbReference type="PANTHER" id="PTHR48489:SF1">
    <property type="entry name" value="INTERLEUKIN-3"/>
    <property type="match status" value="1"/>
</dbReference>
<dbReference type="Pfam" id="PF02059">
    <property type="entry name" value="IL3"/>
    <property type="match status" value="1"/>
</dbReference>
<dbReference type="PIRSF" id="PIRSF001939">
    <property type="entry name" value="IL-3"/>
    <property type="match status" value="1"/>
</dbReference>
<dbReference type="PRINTS" id="PR00430">
    <property type="entry name" value="INTERLEUKIN3"/>
</dbReference>
<dbReference type="SUPFAM" id="SSF47266">
    <property type="entry name" value="4-helical cytokines"/>
    <property type="match status" value="1"/>
</dbReference>
<evidence type="ECO:0000250" key="1"/>
<evidence type="ECO:0000255" key="2"/>
<evidence type="ECO:0000305" key="3"/>
<feature type="signal peptide" evidence="1">
    <location>
        <begin position="1"/>
        <end position="19"/>
    </location>
</feature>
<feature type="chain" id="PRO_0000015518" description="Interleukin-3">
    <location>
        <begin position="20"/>
        <end position="143"/>
    </location>
</feature>
<feature type="glycosylation site" description="N-linked (GlcNAc...) asparagine" evidence="2">
    <location>
        <position position="89"/>
    </location>
</feature>
<feature type="disulfide bond" evidence="1">
    <location>
        <begin position="35"/>
        <end position="103"/>
    </location>
</feature>
<reference key="1">
    <citation type="journal article" date="1990" name="Nucleic Acids Res.">
        <title>Nucleotide sequence of the gene encoding rhesus monkey (Macaca mulatta) interleukin-3.</title>
        <authorList>
            <person name="Burger H."/>
            <person name="Dorssers L.C.J."/>
            <person name="van Leen R.W."/>
            <person name="Wagemaker G."/>
        </authorList>
    </citation>
    <scope>NUCLEOTIDE SEQUENCE [GENOMIC DNA]</scope>
</reference>
<reference key="2">
    <citation type="journal article" date="1990" name="Blood">
        <title>Species specificity of human interleukin-3 demonstrated by cloning and expression of the homologous rhesus monkey (Macaca mulatta) gene.</title>
        <authorList>
            <person name="Burger H."/>
            <person name="van Leen R.W."/>
            <person name="Dorssers L.C.J."/>
            <person name="Persoon N.L.M."/>
            <person name="Lemson P.J."/>
            <person name="Wagemaker G."/>
        </authorList>
    </citation>
    <scope>NUCLEOTIDE SEQUENCE [GENOMIC DNA]</scope>
</reference>
<name>IL3_MACMU</name>
<organism>
    <name type="scientific">Macaca mulatta</name>
    <name type="common">Rhesus macaque</name>
    <dbReference type="NCBI Taxonomy" id="9544"/>
    <lineage>
        <taxon>Eukaryota</taxon>
        <taxon>Metazoa</taxon>
        <taxon>Chordata</taxon>
        <taxon>Craniata</taxon>
        <taxon>Vertebrata</taxon>
        <taxon>Euteleostomi</taxon>
        <taxon>Mammalia</taxon>
        <taxon>Eutheria</taxon>
        <taxon>Euarchontoglires</taxon>
        <taxon>Primates</taxon>
        <taxon>Haplorrhini</taxon>
        <taxon>Catarrhini</taxon>
        <taxon>Cercopithecidae</taxon>
        <taxon>Cercopithecinae</taxon>
        <taxon>Macaca</taxon>
    </lineage>
</organism>
<proteinExistence type="evidence at transcript level"/>
<gene>
    <name type="primary">IL3</name>
</gene>